<proteinExistence type="inferred from homology"/>
<dbReference type="EC" id="2.1.3.3"/>
<dbReference type="EMBL" id="AY282502">
    <property type="protein sequence ID" value="AAP38180.1"/>
    <property type="molecule type" value="Genomic_DNA"/>
</dbReference>
<dbReference type="RefSeq" id="WP_045748644.1">
    <property type="nucleotide sequence ID" value="NZ_CP041701.1"/>
</dbReference>
<dbReference type="SMR" id="P59779"/>
<dbReference type="STRING" id="40480.BVA24_00485"/>
<dbReference type="UniPathway" id="UPA00254">
    <property type="reaction ID" value="UER00365"/>
</dbReference>
<dbReference type="GO" id="GO:0005737">
    <property type="term" value="C:cytoplasm"/>
    <property type="evidence" value="ECO:0007669"/>
    <property type="project" value="UniProtKB-SubCell"/>
</dbReference>
<dbReference type="GO" id="GO:0016597">
    <property type="term" value="F:amino acid binding"/>
    <property type="evidence" value="ECO:0007669"/>
    <property type="project" value="InterPro"/>
</dbReference>
<dbReference type="GO" id="GO:0004585">
    <property type="term" value="F:ornithine carbamoyltransferase activity"/>
    <property type="evidence" value="ECO:0007669"/>
    <property type="project" value="UniProtKB-UniRule"/>
</dbReference>
<dbReference type="GO" id="GO:0042450">
    <property type="term" value="P:arginine biosynthetic process via ornithine"/>
    <property type="evidence" value="ECO:0007669"/>
    <property type="project" value="TreeGrafter"/>
</dbReference>
<dbReference type="GO" id="GO:0019547">
    <property type="term" value="P:arginine catabolic process to ornithine"/>
    <property type="evidence" value="ECO:0007669"/>
    <property type="project" value="UniProtKB-UniPathway"/>
</dbReference>
<dbReference type="GO" id="GO:0019240">
    <property type="term" value="P:citrulline biosynthetic process"/>
    <property type="evidence" value="ECO:0007669"/>
    <property type="project" value="TreeGrafter"/>
</dbReference>
<dbReference type="FunFam" id="3.40.50.1370:FF:000008">
    <property type="entry name" value="Ornithine carbamoyltransferase"/>
    <property type="match status" value="1"/>
</dbReference>
<dbReference type="Gene3D" id="3.40.50.1370">
    <property type="entry name" value="Aspartate/ornithine carbamoyltransferase"/>
    <property type="match status" value="2"/>
</dbReference>
<dbReference type="HAMAP" id="MF_01109">
    <property type="entry name" value="OTCase"/>
    <property type="match status" value="1"/>
</dbReference>
<dbReference type="InterPro" id="IPR006132">
    <property type="entry name" value="Asp/Orn_carbamoyltranf_P-bd"/>
</dbReference>
<dbReference type="InterPro" id="IPR006130">
    <property type="entry name" value="Asp/Orn_carbamoylTrfase"/>
</dbReference>
<dbReference type="InterPro" id="IPR036901">
    <property type="entry name" value="Asp/Orn_carbamoylTrfase_sf"/>
</dbReference>
<dbReference type="InterPro" id="IPR006131">
    <property type="entry name" value="Asp_carbamoyltransf_Asp/Orn-bd"/>
</dbReference>
<dbReference type="InterPro" id="IPR002292">
    <property type="entry name" value="Orn/put_carbamltrans"/>
</dbReference>
<dbReference type="InterPro" id="IPR024904">
    <property type="entry name" value="OTCase_ArgI"/>
</dbReference>
<dbReference type="NCBIfam" id="TIGR00658">
    <property type="entry name" value="orni_carb_tr"/>
    <property type="match status" value="1"/>
</dbReference>
<dbReference type="PANTHER" id="PTHR45753:SF2">
    <property type="entry name" value="ORNITHINE CARBAMOYLTRANSFERASE"/>
    <property type="match status" value="1"/>
</dbReference>
<dbReference type="PANTHER" id="PTHR45753">
    <property type="entry name" value="ORNITHINE CARBAMOYLTRANSFERASE, MITOCHONDRIAL"/>
    <property type="match status" value="1"/>
</dbReference>
<dbReference type="Pfam" id="PF00185">
    <property type="entry name" value="OTCace"/>
    <property type="match status" value="1"/>
</dbReference>
<dbReference type="Pfam" id="PF02729">
    <property type="entry name" value="OTCace_N"/>
    <property type="match status" value="1"/>
</dbReference>
<dbReference type="PRINTS" id="PR00100">
    <property type="entry name" value="AOTCASE"/>
</dbReference>
<dbReference type="PRINTS" id="PR00102">
    <property type="entry name" value="OTCASE"/>
</dbReference>
<dbReference type="SUPFAM" id="SSF53671">
    <property type="entry name" value="Aspartate/ornithine carbamoyltransferase"/>
    <property type="match status" value="1"/>
</dbReference>
<dbReference type="PROSITE" id="PS00097">
    <property type="entry name" value="CARBAMOYLTRANSFERASE"/>
    <property type="match status" value="1"/>
</dbReference>
<evidence type="ECO:0000250" key="1"/>
<evidence type="ECO:0000255" key="2">
    <source>
        <dbReference type="HAMAP-Rule" id="MF_01109"/>
    </source>
</evidence>
<evidence type="ECO:0000305" key="3"/>
<organism>
    <name type="scientific">Mycoplasma capricolum subsp. capripneumoniae</name>
    <dbReference type="NCBI Taxonomy" id="40480"/>
    <lineage>
        <taxon>Bacteria</taxon>
        <taxon>Bacillati</taxon>
        <taxon>Mycoplasmatota</taxon>
        <taxon>Mollicutes</taxon>
        <taxon>Mycoplasmataceae</taxon>
        <taxon>Mycoplasma</taxon>
    </lineage>
</organism>
<reference key="1">
    <citation type="journal article" date="2003" name="Mol. Cell. Probes">
        <title>A specific PCR for the detection of Mycoplasma putrefaciens, one of the agents of the contagious agalactia syndrome of goats.</title>
        <authorList>
            <person name="Peyraud A."/>
            <person name="Woubit S."/>
            <person name="Poveda J.B."/>
            <person name="De la Fe C."/>
            <person name="Mercier P."/>
            <person name="Thiaucourt F."/>
        </authorList>
    </citation>
    <scope>NUCLEOTIDE SEQUENCE [GENOMIC DNA]</scope>
    <source>
        <strain>GL100</strain>
    </source>
</reference>
<name>OTCC_MYCCC</name>
<protein>
    <recommendedName>
        <fullName>Ornithine carbamoyltransferase, catabolic</fullName>
        <shortName>OTCase</shortName>
        <ecNumber>2.1.3.3</ecNumber>
    </recommendedName>
</protein>
<feature type="chain" id="PRO_0000112950" description="Ornithine carbamoyltransferase, catabolic">
    <location>
        <begin position="1"/>
        <end position="312"/>
    </location>
</feature>
<feature type="binding site" evidence="2">
    <location>
        <begin position="57"/>
        <end position="60"/>
    </location>
    <ligand>
        <name>carbamoyl phosphate</name>
        <dbReference type="ChEBI" id="CHEBI:58228"/>
    </ligand>
</feature>
<feature type="binding site" evidence="2">
    <location>
        <position position="84"/>
    </location>
    <ligand>
        <name>carbamoyl phosphate</name>
        <dbReference type="ChEBI" id="CHEBI:58228"/>
    </ligand>
</feature>
<feature type="binding site" evidence="2">
    <location>
        <position position="108"/>
    </location>
    <ligand>
        <name>carbamoyl phosphate</name>
        <dbReference type="ChEBI" id="CHEBI:58228"/>
    </ligand>
</feature>
<feature type="binding site" evidence="2">
    <location>
        <begin position="135"/>
        <end position="138"/>
    </location>
    <ligand>
        <name>carbamoyl phosphate</name>
        <dbReference type="ChEBI" id="CHEBI:58228"/>
    </ligand>
</feature>
<feature type="binding site" evidence="2">
    <location>
        <position position="167"/>
    </location>
    <ligand>
        <name>L-ornithine</name>
        <dbReference type="ChEBI" id="CHEBI:46911"/>
    </ligand>
</feature>
<feature type="binding site" evidence="2">
    <location>
        <position position="231"/>
    </location>
    <ligand>
        <name>L-ornithine</name>
        <dbReference type="ChEBI" id="CHEBI:46911"/>
    </ligand>
</feature>
<feature type="binding site" evidence="2">
    <location>
        <begin position="235"/>
        <end position="236"/>
    </location>
    <ligand>
        <name>L-ornithine</name>
        <dbReference type="ChEBI" id="CHEBI:46911"/>
    </ligand>
</feature>
<feature type="binding site" evidence="2">
    <location>
        <begin position="272"/>
        <end position="273"/>
    </location>
    <ligand>
        <name>carbamoyl phosphate</name>
        <dbReference type="ChEBI" id="CHEBI:58228"/>
    </ligand>
</feature>
<comment type="function">
    <text evidence="1">Reversibly catalyzes the transfer of the carbamoyl group from carbamoyl phosphate (CP) to the N(epsilon) atom of ornithine (ORN) to produce L-citrulline.</text>
</comment>
<comment type="catalytic activity">
    <reaction>
        <text>carbamoyl phosphate + L-ornithine = L-citrulline + phosphate + H(+)</text>
        <dbReference type="Rhea" id="RHEA:19513"/>
        <dbReference type="ChEBI" id="CHEBI:15378"/>
        <dbReference type="ChEBI" id="CHEBI:43474"/>
        <dbReference type="ChEBI" id="CHEBI:46911"/>
        <dbReference type="ChEBI" id="CHEBI:57743"/>
        <dbReference type="ChEBI" id="CHEBI:58228"/>
        <dbReference type="EC" id="2.1.3.3"/>
    </reaction>
</comment>
<comment type="pathway">
    <text>Amino-acid degradation; L-arginine degradation via ADI pathway; carbamoyl phosphate from L-arginine: step 2/2.</text>
</comment>
<comment type="subcellular location">
    <subcellularLocation>
        <location evidence="1">Cytoplasm</location>
    </subcellularLocation>
</comment>
<comment type="similarity">
    <text evidence="3">Belongs to the aspartate/ornithine carbamoyltransferase superfamily. OTCase family.</text>
</comment>
<keyword id="KW-0056">Arginine metabolism</keyword>
<keyword id="KW-0963">Cytoplasm</keyword>
<keyword id="KW-0808">Transferase</keyword>
<gene>
    <name type="primary">arcB</name>
</gene>
<accession>P59779</accession>
<sequence length="312" mass="35026">MALNLKGKSFLKLLDFSPREIRYLLDLSRDLKRAKYAGNEVQTMQGKNVVLLFQKNSTRTRCAFEVATLDQGAHVTYLGPSGSQFGKKESVADTAKVLGRMYDAIEFRGYEQSVVEDLAKYSGVPVYNGLTNEFHPTQILADFLTVEEYKGNLKGLKFVFAGDTRNNVATSLMVGCAKMGMHFVGAAPKELWPSEDLVNQSKEIAKETNATISFVEDMKQACSDADVIYTDVWVSMGEPAEVWESRINLLKPFQVNMDAIKVAKPDVIFMHCLPSFHDLNTEVGRQIYEKFGIPEMEVTNEVFESKHSVVFE</sequence>